<comment type="function">
    <text evidence="1">Catalyzes the phosphorylation of pantothenate (Pan), the first step in CoA biosynthesis.</text>
</comment>
<comment type="catalytic activity">
    <reaction evidence="1">
        <text>(R)-pantothenate + ATP = (R)-4'-phosphopantothenate + ADP + H(+)</text>
        <dbReference type="Rhea" id="RHEA:16373"/>
        <dbReference type="ChEBI" id="CHEBI:10986"/>
        <dbReference type="ChEBI" id="CHEBI:15378"/>
        <dbReference type="ChEBI" id="CHEBI:29032"/>
        <dbReference type="ChEBI" id="CHEBI:30616"/>
        <dbReference type="ChEBI" id="CHEBI:456216"/>
        <dbReference type="EC" id="2.7.1.33"/>
    </reaction>
</comment>
<comment type="cofactor">
    <cofactor evidence="1">
        <name>NH4(+)</name>
        <dbReference type="ChEBI" id="CHEBI:28938"/>
    </cofactor>
    <cofactor evidence="1">
        <name>K(+)</name>
        <dbReference type="ChEBI" id="CHEBI:29103"/>
    </cofactor>
    <text evidence="1">A monovalent cation. Ammonium or potassium.</text>
</comment>
<comment type="pathway">
    <text evidence="1">Cofactor biosynthesis; coenzyme A biosynthesis; CoA from (R)-pantothenate: step 1/5.</text>
</comment>
<comment type="subunit">
    <text evidence="1">Homodimer.</text>
</comment>
<comment type="subcellular location">
    <subcellularLocation>
        <location evidence="1">Cytoplasm</location>
    </subcellularLocation>
</comment>
<comment type="similarity">
    <text evidence="1">Belongs to the type III pantothenate kinase family.</text>
</comment>
<dbReference type="EC" id="2.7.1.33" evidence="1"/>
<dbReference type="EMBL" id="AP008230">
    <property type="protein sequence ID" value="BAE82005.1"/>
    <property type="molecule type" value="Genomic_DNA"/>
</dbReference>
<dbReference type="RefSeq" id="WP_005809761.1">
    <property type="nucleotide sequence ID" value="NC_007907.1"/>
</dbReference>
<dbReference type="SMR" id="Q251N7"/>
<dbReference type="STRING" id="138119.DSY0216"/>
<dbReference type="KEGG" id="dsy:DSY0216"/>
<dbReference type="eggNOG" id="COG1521">
    <property type="taxonomic scope" value="Bacteria"/>
</dbReference>
<dbReference type="HOGENOM" id="CLU_066627_1_0_9"/>
<dbReference type="UniPathway" id="UPA00241">
    <property type="reaction ID" value="UER00352"/>
</dbReference>
<dbReference type="Proteomes" id="UP000001946">
    <property type="component" value="Chromosome"/>
</dbReference>
<dbReference type="GO" id="GO:0005737">
    <property type="term" value="C:cytoplasm"/>
    <property type="evidence" value="ECO:0007669"/>
    <property type="project" value="UniProtKB-SubCell"/>
</dbReference>
<dbReference type="GO" id="GO:0005524">
    <property type="term" value="F:ATP binding"/>
    <property type="evidence" value="ECO:0007669"/>
    <property type="project" value="UniProtKB-UniRule"/>
</dbReference>
<dbReference type="GO" id="GO:0046872">
    <property type="term" value="F:metal ion binding"/>
    <property type="evidence" value="ECO:0007669"/>
    <property type="project" value="UniProtKB-KW"/>
</dbReference>
<dbReference type="GO" id="GO:0004594">
    <property type="term" value="F:pantothenate kinase activity"/>
    <property type="evidence" value="ECO:0007669"/>
    <property type="project" value="UniProtKB-UniRule"/>
</dbReference>
<dbReference type="GO" id="GO:0015937">
    <property type="term" value="P:coenzyme A biosynthetic process"/>
    <property type="evidence" value="ECO:0007669"/>
    <property type="project" value="UniProtKB-UniRule"/>
</dbReference>
<dbReference type="CDD" id="cd24015">
    <property type="entry name" value="ASKHA_NBD_PanK-III"/>
    <property type="match status" value="1"/>
</dbReference>
<dbReference type="Gene3D" id="3.30.420.40">
    <property type="match status" value="2"/>
</dbReference>
<dbReference type="HAMAP" id="MF_01274">
    <property type="entry name" value="Pantothen_kinase_3"/>
    <property type="match status" value="1"/>
</dbReference>
<dbReference type="InterPro" id="IPR043129">
    <property type="entry name" value="ATPase_NBD"/>
</dbReference>
<dbReference type="InterPro" id="IPR004619">
    <property type="entry name" value="Type_III_PanK"/>
</dbReference>
<dbReference type="NCBIfam" id="TIGR00671">
    <property type="entry name" value="baf"/>
    <property type="match status" value="1"/>
</dbReference>
<dbReference type="NCBIfam" id="NF009847">
    <property type="entry name" value="PRK13318.1-5"/>
    <property type="match status" value="1"/>
</dbReference>
<dbReference type="NCBIfam" id="NF009848">
    <property type="entry name" value="PRK13318.1-6"/>
    <property type="match status" value="1"/>
</dbReference>
<dbReference type="NCBIfam" id="NF009855">
    <property type="entry name" value="PRK13321.1"/>
    <property type="match status" value="1"/>
</dbReference>
<dbReference type="PANTHER" id="PTHR34265">
    <property type="entry name" value="TYPE III PANTOTHENATE KINASE"/>
    <property type="match status" value="1"/>
</dbReference>
<dbReference type="PANTHER" id="PTHR34265:SF1">
    <property type="entry name" value="TYPE III PANTOTHENATE KINASE"/>
    <property type="match status" value="1"/>
</dbReference>
<dbReference type="Pfam" id="PF03309">
    <property type="entry name" value="Pan_kinase"/>
    <property type="match status" value="1"/>
</dbReference>
<dbReference type="SUPFAM" id="SSF53067">
    <property type="entry name" value="Actin-like ATPase domain"/>
    <property type="match status" value="2"/>
</dbReference>
<organism>
    <name type="scientific">Desulfitobacterium hafniense (strain Y51)</name>
    <dbReference type="NCBI Taxonomy" id="138119"/>
    <lineage>
        <taxon>Bacteria</taxon>
        <taxon>Bacillati</taxon>
        <taxon>Bacillota</taxon>
        <taxon>Clostridia</taxon>
        <taxon>Eubacteriales</taxon>
        <taxon>Desulfitobacteriaceae</taxon>
        <taxon>Desulfitobacterium</taxon>
    </lineage>
</organism>
<sequence length="258" mass="28328">MILVFDVGNTNIVLGVYEQKDLIYHWRISTDKSRTVDEYAVIIKNLFDLNGLDMSRIKAVVMSSVVPPVMPTLESLARKYFDVEPLVIGPGVKTGMPIVYDNPREVGADRIVNAVAAYHKYGGPLVIVDFGTATTFCAISKRGEYLGGAIAPGVGISTEALFQRASKLPRIEIVKPKSIIAKNTVAGMQSGIYYGYTGQVDRIVTLMKQELGRDTRVIATGGLAELIQEDSQEIETVDPFLTLEGLLLIYERNSNQQP</sequence>
<proteinExistence type="inferred from homology"/>
<gene>
    <name evidence="1" type="primary">coaX</name>
    <name type="ordered locus">DSY0216</name>
</gene>
<evidence type="ECO:0000255" key="1">
    <source>
        <dbReference type="HAMAP-Rule" id="MF_01274"/>
    </source>
</evidence>
<name>COAX_DESHY</name>
<feature type="chain" id="PRO_0000267521" description="Type III pantothenate kinase">
    <location>
        <begin position="1"/>
        <end position="258"/>
    </location>
</feature>
<feature type="active site" description="Proton acceptor" evidence="1">
    <location>
        <position position="109"/>
    </location>
</feature>
<feature type="binding site" evidence="1">
    <location>
        <begin position="6"/>
        <end position="13"/>
    </location>
    <ligand>
        <name>ATP</name>
        <dbReference type="ChEBI" id="CHEBI:30616"/>
    </ligand>
</feature>
<feature type="binding site" evidence="1">
    <location>
        <position position="100"/>
    </location>
    <ligand>
        <name>substrate</name>
    </ligand>
</feature>
<feature type="binding site" evidence="1">
    <location>
        <begin position="107"/>
        <end position="110"/>
    </location>
    <ligand>
        <name>substrate</name>
    </ligand>
</feature>
<feature type="binding site" evidence="1">
    <location>
        <position position="129"/>
    </location>
    <ligand>
        <name>K(+)</name>
        <dbReference type="ChEBI" id="CHEBI:29103"/>
    </ligand>
</feature>
<feature type="binding site" evidence="1">
    <location>
        <position position="132"/>
    </location>
    <ligand>
        <name>ATP</name>
        <dbReference type="ChEBI" id="CHEBI:30616"/>
    </ligand>
</feature>
<feature type="binding site" evidence="1">
    <location>
        <position position="184"/>
    </location>
    <ligand>
        <name>substrate</name>
    </ligand>
</feature>
<keyword id="KW-0067">ATP-binding</keyword>
<keyword id="KW-0173">Coenzyme A biosynthesis</keyword>
<keyword id="KW-0963">Cytoplasm</keyword>
<keyword id="KW-0418">Kinase</keyword>
<keyword id="KW-0479">Metal-binding</keyword>
<keyword id="KW-0547">Nucleotide-binding</keyword>
<keyword id="KW-0630">Potassium</keyword>
<keyword id="KW-1185">Reference proteome</keyword>
<keyword id="KW-0808">Transferase</keyword>
<reference key="1">
    <citation type="journal article" date="2006" name="J. Bacteriol.">
        <title>Complete genome sequence of the dehalorespiring bacterium Desulfitobacterium hafniense Y51 and comparison with Dehalococcoides ethenogenes 195.</title>
        <authorList>
            <person name="Nonaka H."/>
            <person name="Keresztes G."/>
            <person name="Shinoda Y."/>
            <person name="Ikenaga Y."/>
            <person name="Abe M."/>
            <person name="Naito K."/>
            <person name="Inatomi K."/>
            <person name="Furukawa K."/>
            <person name="Inui M."/>
            <person name="Yukawa H."/>
        </authorList>
    </citation>
    <scope>NUCLEOTIDE SEQUENCE [LARGE SCALE GENOMIC DNA]</scope>
    <source>
        <strain>Y51</strain>
    </source>
</reference>
<protein>
    <recommendedName>
        <fullName evidence="1">Type III pantothenate kinase</fullName>
        <ecNumber evidence="1">2.7.1.33</ecNumber>
    </recommendedName>
    <alternativeName>
        <fullName evidence="1">PanK-III</fullName>
    </alternativeName>
    <alternativeName>
        <fullName evidence="1">Pantothenic acid kinase</fullName>
    </alternativeName>
</protein>
<accession>Q251N7</accession>